<accession>Q65I80</accession>
<accession>Q62TN1</accession>
<sequence length="98" mass="11575">MLADKVKLSAKEILEKEFKTGVRGYKQEDVDKFLDMVIKDYEAFHQEIEELQQENLQLKKQLEEANKRQPAQSNTTNFDILKRLSNLEKHVFGSKLYD</sequence>
<comment type="function">
    <text evidence="1">Divisome component that associates with the complex late in its assembly, after the Z-ring is formed, and is dependent on DivIC and PBP2B for its recruitment to the divisome. Together with EzrA, is a key component of the system that regulates PBP1 localization during cell cycle progression. Its main role could be the removal of PBP1 from the cell pole after pole maturation is completed. Also contributes to the recruitment of PBP1 to the division complex. Not essential for septum formation.</text>
</comment>
<comment type="subunit">
    <text evidence="1">Forms polymers through the coiled coil domains. Interacts with PBP1, MreC and EzrA.</text>
</comment>
<comment type="subcellular location">
    <subcellularLocation>
        <location evidence="1">Cytoplasm</location>
    </subcellularLocation>
    <text evidence="1">Shuttles between the lateral wall and the division site in a cell cycle-dependent manner.</text>
</comment>
<comment type="similarity">
    <text evidence="1">Belongs to the GpsB family.</text>
</comment>
<dbReference type="EMBL" id="CP000002">
    <property type="protein sequence ID" value="AAU23878.1"/>
    <property type="molecule type" value="Genomic_DNA"/>
</dbReference>
<dbReference type="EMBL" id="AE017333">
    <property type="protein sequence ID" value="AAU41234.1"/>
    <property type="molecule type" value="Genomic_DNA"/>
</dbReference>
<dbReference type="RefSeq" id="WP_003182873.1">
    <property type="nucleotide sequence ID" value="NC_006322.1"/>
</dbReference>
<dbReference type="SMR" id="Q65I80"/>
<dbReference type="STRING" id="279010.BL05235"/>
<dbReference type="GeneID" id="92861048"/>
<dbReference type="KEGG" id="bld:BLi02354"/>
<dbReference type="KEGG" id="bli:BL05235"/>
<dbReference type="eggNOG" id="COG3599">
    <property type="taxonomic scope" value="Bacteria"/>
</dbReference>
<dbReference type="HOGENOM" id="CLU_140309_1_0_9"/>
<dbReference type="Proteomes" id="UP000000606">
    <property type="component" value="Chromosome"/>
</dbReference>
<dbReference type="GO" id="GO:0005737">
    <property type="term" value="C:cytoplasm"/>
    <property type="evidence" value="ECO:0007669"/>
    <property type="project" value="UniProtKB-SubCell"/>
</dbReference>
<dbReference type="GO" id="GO:0051301">
    <property type="term" value="P:cell division"/>
    <property type="evidence" value="ECO:0007669"/>
    <property type="project" value="UniProtKB-UniRule"/>
</dbReference>
<dbReference type="GO" id="GO:0008360">
    <property type="term" value="P:regulation of cell shape"/>
    <property type="evidence" value="ECO:0007669"/>
    <property type="project" value="UniProtKB-UniRule"/>
</dbReference>
<dbReference type="Gene3D" id="6.10.250.660">
    <property type="match status" value="1"/>
</dbReference>
<dbReference type="HAMAP" id="MF_02011">
    <property type="entry name" value="GpsB"/>
    <property type="match status" value="1"/>
</dbReference>
<dbReference type="InterPro" id="IPR011229">
    <property type="entry name" value="Cell_cycle_GpsB"/>
</dbReference>
<dbReference type="InterPro" id="IPR019933">
    <property type="entry name" value="DivIVA_domain"/>
</dbReference>
<dbReference type="InterPro" id="IPR007793">
    <property type="entry name" value="DivIVA_fam"/>
</dbReference>
<dbReference type="NCBIfam" id="TIGR03544">
    <property type="entry name" value="DivI1A_domain"/>
    <property type="match status" value="1"/>
</dbReference>
<dbReference type="NCBIfam" id="NF010725">
    <property type="entry name" value="PRK14127.1"/>
    <property type="match status" value="1"/>
</dbReference>
<dbReference type="PANTHER" id="PTHR35794:SF1">
    <property type="entry name" value="CELL CYCLE PROTEIN GPSB"/>
    <property type="match status" value="1"/>
</dbReference>
<dbReference type="PANTHER" id="PTHR35794">
    <property type="entry name" value="CELL DIVISION PROTEIN DIVIVA"/>
    <property type="match status" value="1"/>
</dbReference>
<dbReference type="Pfam" id="PF05103">
    <property type="entry name" value="DivIVA"/>
    <property type="match status" value="1"/>
</dbReference>
<dbReference type="PIRSF" id="PIRSF029938">
    <property type="entry name" value="UCP029938"/>
    <property type="match status" value="1"/>
</dbReference>
<proteinExistence type="inferred from homology"/>
<protein>
    <recommendedName>
        <fullName evidence="1">Cell cycle protein GpsB</fullName>
    </recommendedName>
    <alternativeName>
        <fullName evidence="1">Guiding PBP1-shuttling protein</fullName>
    </alternativeName>
</protein>
<reference key="1">
    <citation type="journal article" date="2004" name="J. Mol. Microbiol. Biotechnol.">
        <title>The complete genome sequence of Bacillus licheniformis DSM13, an organism with great industrial potential.</title>
        <authorList>
            <person name="Veith B."/>
            <person name="Herzberg C."/>
            <person name="Steckel S."/>
            <person name="Feesche J."/>
            <person name="Maurer K.H."/>
            <person name="Ehrenreich P."/>
            <person name="Baeumer S."/>
            <person name="Henne A."/>
            <person name="Liesegang H."/>
            <person name="Merkl R."/>
            <person name="Ehrenreich A."/>
            <person name="Gottschalk G."/>
        </authorList>
    </citation>
    <scope>NUCLEOTIDE SEQUENCE [LARGE SCALE GENOMIC DNA]</scope>
    <source>
        <strain>ATCC 14580 / DSM 13 / JCM 2505 / CCUG 7422 / NBRC 12200 / NCIMB 9375 / NCTC 10341 / NRRL NRS-1264 / Gibson 46</strain>
    </source>
</reference>
<reference key="2">
    <citation type="journal article" date="2004" name="Genome Biol.">
        <title>Complete genome sequence of the industrial bacterium Bacillus licheniformis and comparisons with closely related Bacillus species.</title>
        <authorList>
            <person name="Rey M.W."/>
            <person name="Ramaiya P."/>
            <person name="Nelson B.A."/>
            <person name="Brody-Karpin S.D."/>
            <person name="Zaretsky E.J."/>
            <person name="Tang M."/>
            <person name="Lopez de Leon A."/>
            <person name="Xiang H."/>
            <person name="Gusti V."/>
            <person name="Clausen I.G."/>
            <person name="Olsen P.B."/>
            <person name="Rasmussen M.D."/>
            <person name="Andersen J.T."/>
            <person name="Joergensen P.L."/>
            <person name="Larsen T.S."/>
            <person name="Sorokin A."/>
            <person name="Bolotin A."/>
            <person name="Lapidus A."/>
            <person name="Galleron N."/>
            <person name="Ehrlich S.D."/>
            <person name="Berka R.M."/>
        </authorList>
    </citation>
    <scope>NUCLEOTIDE SEQUENCE [LARGE SCALE GENOMIC DNA]</scope>
    <source>
        <strain>ATCC 14580 / DSM 13 / JCM 2505 / CCUG 7422 / NBRC 12200 / NCIMB 9375 / NCTC 10341 / NRRL NRS-1264 / Gibson 46</strain>
    </source>
</reference>
<organism>
    <name type="scientific">Bacillus licheniformis (strain ATCC 14580 / DSM 13 / JCM 2505 / CCUG 7422 / NBRC 12200 / NCIMB 9375 / NCTC 10341 / NRRL NRS-1264 / Gibson 46)</name>
    <dbReference type="NCBI Taxonomy" id="279010"/>
    <lineage>
        <taxon>Bacteria</taxon>
        <taxon>Bacillati</taxon>
        <taxon>Bacillota</taxon>
        <taxon>Bacilli</taxon>
        <taxon>Bacillales</taxon>
        <taxon>Bacillaceae</taxon>
        <taxon>Bacillus</taxon>
    </lineage>
</organism>
<name>GPSB_BACLD</name>
<gene>
    <name evidence="1" type="primary">gpsB</name>
    <name type="ordered locus">BLi02354</name>
    <name type="ordered locus">BL05235</name>
</gene>
<evidence type="ECO:0000255" key="1">
    <source>
        <dbReference type="HAMAP-Rule" id="MF_02011"/>
    </source>
</evidence>
<feature type="chain" id="PRO_0000337913" description="Cell cycle protein GpsB">
    <location>
        <begin position="1"/>
        <end position="98"/>
    </location>
</feature>
<feature type="coiled-coil region" evidence="1">
    <location>
        <begin position="34"/>
        <end position="72"/>
    </location>
</feature>
<keyword id="KW-0131">Cell cycle</keyword>
<keyword id="KW-0132">Cell division</keyword>
<keyword id="KW-0133">Cell shape</keyword>
<keyword id="KW-0175">Coiled coil</keyword>
<keyword id="KW-0963">Cytoplasm</keyword>
<keyword id="KW-1185">Reference proteome</keyword>